<gene>
    <name evidence="1" type="primary">plsX</name>
    <name type="ordered locus">COSY_0447</name>
</gene>
<feature type="chain" id="PRO_1000001859" description="Phosphate acyltransferase">
    <location>
        <begin position="1"/>
        <end position="339"/>
    </location>
</feature>
<accession>A5CWU8</accession>
<proteinExistence type="inferred from homology"/>
<organism>
    <name type="scientific">Vesicomyosocius okutanii subsp. Calyptogena okutanii (strain HA)</name>
    <dbReference type="NCBI Taxonomy" id="412965"/>
    <lineage>
        <taxon>Bacteria</taxon>
        <taxon>Pseudomonadati</taxon>
        <taxon>Pseudomonadota</taxon>
        <taxon>Gammaproteobacteria</taxon>
        <taxon>Candidatus Pseudothioglobaceae</taxon>
        <taxon>Candidatus Vesicomyosocius</taxon>
    </lineage>
</organism>
<evidence type="ECO:0000255" key="1">
    <source>
        <dbReference type="HAMAP-Rule" id="MF_00019"/>
    </source>
</evidence>
<protein>
    <recommendedName>
        <fullName evidence="1">Phosphate acyltransferase</fullName>
        <ecNumber evidence="1">2.3.1.274</ecNumber>
    </recommendedName>
    <alternativeName>
        <fullName evidence="1">Acyl-ACP phosphotransacylase</fullName>
    </alternativeName>
    <alternativeName>
        <fullName evidence="1">Acyl-[acyl-carrier-protein]--phosphate acyltransferase</fullName>
    </alternativeName>
    <alternativeName>
        <fullName evidence="1">Phosphate-acyl-ACP acyltransferase</fullName>
    </alternativeName>
</protein>
<comment type="function">
    <text evidence="1">Catalyzes the reversible formation of acyl-phosphate (acyl-PO(4)) from acyl-[acyl-carrier-protein] (acyl-ACP). This enzyme utilizes acyl-ACP as fatty acyl donor, but not acyl-CoA.</text>
</comment>
<comment type="catalytic activity">
    <reaction evidence="1">
        <text>a fatty acyl-[ACP] + phosphate = an acyl phosphate + holo-[ACP]</text>
        <dbReference type="Rhea" id="RHEA:42292"/>
        <dbReference type="Rhea" id="RHEA-COMP:9685"/>
        <dbReference type="Rhea" id="RHEA-COMP:14125"/>
        <dbReference type="ChEBI" id="CHEBI:43474"/>
        <dbReference type="ChEBI" id="CHEBI:59918"/>
        <dbReference type="ChEBI" id="CHEBI:64479"/>
        <dbReference type="ChEBI" id="CHEBI:138651"/>
        <dbReference type="EC" id="2.3.1.274"/>
    </reaction>
</comment>
<comment type="pathway">
    <text evidence="1">Lipid metabolism; phospholipid metabolism.</text>
</comment>
<comment type="subunit">
    <text evidence="1">Homodimer. Probably interacts with PlsY.</text>
</comment>
<comment type="subcellular location">
    <subcellularLocation>
        <location evidence="1">Cytoplasm</location>
    </subcellularLocation>
    <text evidence="1">Associated with the membrane possibly through PlsY.</text>
</comment>
<comment type="similarity">
    <text evidence="1">Belongs to the PlsX family.</text>
</comment>
<sequence length="339" mass="36576">MAIKVSIDASGGDYGIPVTIVAGIKALNIFQDLHLYFVGNEPSITTELGKYPSNTLNSRYTIIHASEVVLMNESPAIALRKKKDSSMRIAINLVKTFKADACVSAGNTGALMAISRFVLRTIKGIDRPAIMGRMPTITGHTHMLDLGANVDSKPKALVEFATMGSIAVKHTENIESPTIGLLNIGEEDMKGSEKIRKAATLLKASNLNYVGFVEGNDIYKGIVDLIVCDGFEGNIALKASEGVASMMEHYLKQAFTRNLLTKLVSLIAIPVLKDFKSSLNPDKYNGASLLGLRGIVVKSHGSANIDSFLTAITEAYIEAHAKISDKISLQISKELEHNE</sequence>
<dbReference type="EC" id="2.3.1.274" evidence="1"/>
<dbReference type="EMBL" id="AP009247">
    <property type="protein sequence ID" value="BAF61566.1"/>
    <property type="molecule type" value="Genomic_DNA"/>
</dbReference>
<dbReference type="RefSeq" id="WP_011929836.1">
    <property type="nucleotide sequence ID" value="NC_009465.1"/>
</dbReference>
<dbReference type="SMR" id="A5CWU8"/>
<dbReference type="STRING" id="412965.COSY_0447"/>
<dbReference type="KEGG" id="vok:COSY_0447"/>
<dbReference type="eggNOG" id="COG0416">
    <property type="taxonomic scope" value="Bacteria"/>
</dbReference>
<dbReference type="HOGENOM" id="CLU_039379_1_0_6"/>
<dbReference type="OrthoDB" id="9806408at2"/>
<dbReference type="UniPathway" id="UPA00085"/>
<dbReference type="Proteomes" id="UP000000247">
    <property type="component" value="Chromosome"/>
</dbReference>
<dbReference type="GO" id="GO:0005737">
    <property type="term" value="C:cytoplasm"/>
    <property type="evidence" value="ECO:0007669"/>
    <property type="project" value="UniProtKB-SubCell"/>
</dbReference>
<dbReference type="GO" id="GO:0043811">
    <property type="term" value="F:phosphate:acyl-[acyl carrier protein] acyltransferase activity"/>
    <property type="evidence" value="ECO:0007669"/>
    <property type="project" value="UniProtKB-UniRule"/>
</dbReference>
<dbReference type="GO" id="GO:0006633">
    <property type="term" value="P:fatty acid biosynthetic process"/>
    <property type="evidence" value="ECO:0007669"/>
    <property type="project" value="UniProtKB-UniRule"/>
</dbReference>
<dbReference type="GO" id="GO:0008654">
    <property type="term" value="P:phospholipid biosynthetic process"/>
    <property type="evidence" value="ECO:0007669"/>
    <property type="project" value="UniProtKB-KW"/>
</dbReference>
<dbReference type="Gene3D" id="3.40.718.10">
    <property type="entry name" value="Isopropylmalate Dehydrogenase"/>
    <property type="match status" value="1"/>
</dbReference>
<dbReference type="HAMAP" id="MF_00019">
    <property type="entry name" value="PlsX"/>
    <property type="match status" value="1"/>
</dbReference>
<dbReference type="InterPro" id="IPR003664">
    <property type="entry name" value="FA_synthesis"/>
</dbReference>
<dbReference type="InterPro" id="IPR012281">
    <property type="entry name" value="Phospholipid_synth_PlsX-like"/>
</dbReference>
<dbReference type="NCBIfam" id="TIGR00182">
    <property type="entry name" value="plsX"/>
    <property type="match status" value="1"/>
</dbReference>
<dbReference type="PANTHER" id="PTHR30100">
    <property type="entry name" value="FATTY ACID/PHOSPHOLIPID SYNTHESIS PROTEIN PLSX"/>
    <property type="match status" value="1"/>
</dbReference>
<dbReference type="PANTHER" id="PTHR30100:SF1">
    <property type="entry name" value="PHOSPHATE ACYLTRANSFERASE"/>
    <property type="match status" value="1"/>
</dbReference>
<dbReference type="Pfam" id="PF02504">
    <property type="entry name" value="FA_synthesis"/>
    <property type="match status" value="1"/>
</dbReference>
<dbReference type="PIRSF" id="PIRSF002465">
    <property type="entry name" value="Phsphlp_syn_PlsX"/>
    <property type="match status" value="1"/>
</dbReference>
<dbReference type="SUPFAM" id="SSF53659">
    <property type="entry name" value="Isocitrate/Isopropylmalate dehydrogenase-like"/>
    <property type="match status" value="1"/>
</dbReference>
<keyword id="KW-0963">Cytoplasm</keyword>
<keyword id="KW-0444">Lipid biosynthesis</keyword>
<keyword id="KW-0443">Lipid metabolism</keyword>
<keyword id="KW-0594">Phospholipid biosynthesis</keyword>
<keyword id="KW-1208">Phospholipid metabolism</keyword>
<keyword id="KW-1185">Reference proteome</keyword>
<keyword id="KW-0808">Transferase</keyword>
<reference key="1">
    <citation type="journal article" date="2007" name="Curr. Biol.">
        <title>Reduced genome of the thioautotrophic intracellular symbiont in a deep-sea clam, Calyptogena okutanii.</title>
        <authorList>
            <person name="Kuwahara H."/>
            <person name="Yoshida T."/>
            <person name="Takaki Y."/>
            <person name="Shimamura S."/>
            <person name="Nishi S."/>
            <person name="Harada M."/>
            <person name="Matsuyama K."/>
            <person name="Takishita K."/>
            <person name="Kawato M."/>
            <person name="Uematsu K."/>
            <person name="Fujiwara Y."/>
            <person name="Sato T."/>
            <person name="Kato C."/>
            <person name="Kitagawa M."/>
            <person name="Kato I."/>
            <person name="Maruyama T."/>
        </authorList>
    </citation>
    <scope>NUCLEOTIDE SEQUENCE [LARGE SCALE GENOMIC DNA]</scope>
    <source>
        <strain>HA</strain>
    </source>
</reference>
<name>PLSX_VESOH</name>